<proteinExistence type="inferred from homology"/>
<dbReference type="EC" id="2.1.1.189" evidence="1"/>
<dbReference type="EMBL" id="CP000800">
    <property type="protein sequence ID" value="ABV18194.1"/>
    <property type="molecule type" value="Genomic_DNA"/>
</dbReference>
<dbReference type="RefSeq" id="WP_001149732.1">
    <property type="nucleotide sequence ID" value="NC_009801.1"/>
</dbReference>
<dbReference type="SMR" id="A7ZJS7"/>
<dbReference type="GeneID" id="75202489"/>
<dbReference type="KEGG" id="ecw:EcE24377A_0931"/>
<dbReference type="HOGENOM" id="CLU_014689_0_0_6"/>
<dbReference type="Proteomes" id="UP000001122">
    <property type="component" value="Chromosome"/>
</dbReference>
<dbReference type="GO" id="GO:0051539">
    <property type="term" value="F:4 iron, 4 sulfur cluster binding"/>
    <property type="evidence" value="ECO:0007669"/>
    <property type="project" value="UniProtKB-KW"/>
</dbReference>
<dbReference type="GO" id="GO:0005506">
    <property type="term" value="F:iron ion binding"/>
    <property type="evidence" value="ECO:0007669"/>
    <property type="project" value="UniProtKB-UniRule"/>
</dbReference>
<dbReference type="GO" id="GO:0070041">
    <property type="term" value="F:rRNA (uridine-C5-)-methyltransferase activity"/>
    <property type="evidence" value="ECO:0007669"/>
    <property type="project" value="UniProtKB-UniRule"/>
</dbReference>
<dbReference type="GO" id="GO:0070475">
    <property type="term" value="P:rRNA base methylation"/>
    <property type="evidence" value="ECO:0007669"/>
    <property type="project" value="TreeGrafter"/>
</dbReference>
<dbReference type="CDD" id="cd02440">
    <property type="entry name" value="AdoMet_MTases"/>
    <property type="match status" value="1"/>
</dbReference>
<dbReference type="FunFam" id="2.40.50.1070:FF:000002">
    <property type="entry name" value="23S rRNA (uracil(747)-C(5))-methyltransferase RlmC"/>
    <property type="match status" value="1"/>
</dbReference>
<dbReference type="FunFam" id="3.40.50.150:FF:000049">
    <property type="entry name" value="23S rRNA (uracil(747)-C(5))-methyltransferase RlmC"/>
    <property type="match status" value="1"/>
</dbReference>
<dbReference type="Gene3D" id="2.40.50.1070">
    <property type="match status" value="1"/>
</dbReference>
<dbReference type="Gene3D" id="3.40.50.150">
    <property type="entry name" value="Vaccinia Virus protein VP39"/>
    <property type="match status" value="1"/>
</dbReference>
<dbReference type="HAMAP" id="MF_01012">
    <property type="entry name" value="23SrRNA_methyltr_RlmC"/>
    <property type="match status" value="1"/>
</dbReference>
<dbReference type="InterPro" id="IPR011825">
    <property type="entry name" value="23SrRNA_MeTrfase_RlmC"/>
</dbReference>
<dbReference type="InterPro" id="IPR030390">
    <property type="entry name" value="MeTrfase_TrmA_AS"/>
</dbReference>
<dbReference type="InterPro" id="IPR030391">
    <property type="entry name" value="MeTrfase_TrmA_CS"/>
</dbReference>
<dbReference type="InterPro" id="IPR029063">
    <property type="entry name" value="SAM-dependent_MTases_sf"/>
</dbReference>
<dbReference type="InterPro" id="IPR010280">
    <property type="entry name" value="U5_MeTrfase_fam"/>
</dbReference>
<dbReference type="NCBIfam" id="TIGR02085">
    <property type="entry name" value="meth_trns_rumB"/>
    <property type="match status" value="1"/>
</dbReference>
<dbReference type="PANTHER" id="PTHR11061">
    <property type="entry name" value="RNA M5U METHYLTRANSFERASE"/>
    <property type="match status" value="1"/>
</dbReference>
<dbReference type="PANTHER" id="PTHR11061:SF30">
    <property type="entry name" value="TRNA (URACIL(54)-C(5))-METHYLTRANSFERASE"/>
    <property type="match status" value="1"/>
</dbReference>
<dbReference type="Pfam" id="PF05958">
    <property type="entry name" value="tRNA_U5-meth_tr"/>
    <property type="match status" value="1"/>
</dbReference>
<dbReference type="SUPFAM" id="SSF53335">
    <property type="entry name" value="S-adenosyl-L-methionine-dependent methyltransferases"/>
    <property type="match status" value="1"/>
</dbReference>
<dbReference type="PROSITE" id="PS51687">
    <property type="entry name" value="SAM_MT_RNA_M5U"/>
    <property type="match status" value="1"/>
</dbReference>
<dbReference type="PROSITE" id="PS01230">
    <property type="entry name" value="TRMA_1"/>
    <property type="match status" value="1"/>
</dbReference>
<dbReference type="PROSITE" id="PS01231">
    <property type="entry name" value="TRMA_2"/>
    <property type="match status" value="1"/>
</dbReference>
<reference key="1">
    <citation type="journal article" date="2008" name="J. Bacteriol.">
        <title>The pangenome structure of Escherichia coli: comparative genomic analysis of E. coli commensal and pathogenic isolates.</title>
        <authorList>
            <person name="Rasko D.A."/>
            <person name="Rosovitz M.J."/>
            <person name="Myers G.S.A."/>
            <person name="Mongodin E.F."/>
            <person name="Fricke W.F."/>
            <person name="Gajer P."/>
            <person name="Crabtree J."/>
            <person name="Sebaihia M."/>
            <person name="Thomson N.R."/>
            <person name="Chaudhuri R."/>
            <person name="Henderson I.R."/>
            <person name="Sperandio V."/>
            <person name="Ravel J."/>
        </authorList>
    </citation>
    <scope>NUCLEOTIDE SEQUENCE [LARGE SCALE GENOMIC DNA]</scope>
    <source>
        <strain>E24377A / ETEC</strain>
    </source>
</reference>
<gene>
    <name evidence="1" type="primary">rlmC</name>
    <name type="synonym">rumB</name>
    <name type="ordered locus">EcE24377A_0931</name>
</gene>
<protein>
    <recommendedName>
        <fullName evidence="1">23S rRNA (uracil(747)-C(5))-methyltransferase RlmC</fullName>
        <ecNumber evidence="1">2.1.1.189</ecNumber>
    </recommendedName>
    <alternativeName>
        <fullName evidence="1">23S rRNA(m5U747)-methyltransferase</fullName>
    </alternativeName>
</protein>
<feature type="chain" id="PRO_1000062998" description="23S rRNA (uracil(747)-C(5))-methyltransferase RlmC">
    <location>
        <begin position="1"/>
        <end position="375"/>
    </location>
</feature>
<feature type="active site" description="Nucleophile" evidence="1">
    <location>
        <position position="334"/>
    </location>
</feature>
<feature type="binding site" evidence="1">
    <location>
        <position position="3"/>
    </location>
    <ligand>
        <name>[4Fe-4S] cluster</name>
        <dbReference type="ChEBI" id="CHEBI:49883"/>
    </ligand>
</feature>
<feature type="binding site" evidence="1">
    <location>
        <position position="11"/>
    </location>
    <ligand>
        <name>[4Fe-4S] cluster</name>
        <dbReference type="ChEBI" id="CHEBI:49883"/>
    </ligand>
</feature>
<feature type="binding site" evidence="1">
    <location>
        <position position="14"/>
    </location>
    <ligand>
        <name>[4Fe-4S] cluster</name>
        <dbReference type="ChEBI" id="CHEBI:49883"/>
    </ligand>
</feature>
<feature type="binding site" evidence="1">
    <location>
        <position position="87"/>
    </location>
    <ligand>
        <name>[4Fe-4S] cluster</name>
        <dbReference type="ChEBI" id="CHEBI:49883"/>
    </ligand>
</feature>
<feature type="binding site" evidence="1">
    <location>
        <position position="212"/>
    </location>
    <ligand>
        <name>S-adenosyl-L-methionine</name>
        <dbReference type="ChEBI" id="CHEBI:59789"/>
    </ligand>
</feature>
<feature type="binding site" evidence="1">
    <location>
        <position position="241"/>
    </location>
    <ligand>
        <name>S-adenosyl-L-methionine</name>
        <dbReference type="ChEBI" id="CHEBI:59789"/>
    </ligand>
</feature>
<feature type="binding site" evidence="1">
    <location>
        <position position="262"/>
    </location>
    <ligand>
        <name>S-adenosyl-L-methionine</name>
        <dbReference type="ChEBI" id="CHEBI:59789"/>
    </ligand>
</feature>
<feature type="binding site" evidence="1">
    <location>
        <position position="307"/>
    </location>
    <ligand>
        <name>S-adenosyl-L-methionine</name>
        <dbReference type="ChEBI" id="CHEBI:59789"/>
    </ligand>
</feature>
<evidence type="ECO:0000255" key="1">
    <source>
        <dbReference type="HAMAP-Rule" id="MF_01012"/>
    </source>
</evidence>
<keyword id="KW-0004">4Fe-4S</keyword>
<keyword id="KW-0408">Iron</keyword>
<keyword id="KW-0411">Iron-sulfur</keyword>
<keyword id="KW-0479">Metal-binding</keyword>
<keyword id="KW-0489">Methyltransferase</keyword>
<keyword id="KW-1185">Reference proteome</keyword>
<keyword id="KW-0698">rRNA processing</keyword>
<keyword id="KW-0949">S-adenosyl-L-methionine</keyword>
<keyword id="KW-0808">Transferase</keyword>
<comment type="function">
    <text evidence="1">Catalyzes the formation of 5-methyl-uridine at position 747 (m5U747) in 23S rRNA.</text>
</comment>
<comment type="catalytic activity">
    <reaction evidence="1">
        <text>uridine(747) in 23S rRNA + S-adenosyl-L-methionine = 5-methyluridine(747) in 23S rRNA + S-adenosyl-L-homocysteine + H(+)</text>
        <dbReference type="Rhea" id="RHEA:42628"/>
        <dbReference type="Rhea" id="RHEA-COMP:10154"/>
        <dbReference type="Rhea" id="RHEA-COMP:10155"/>
        <dbReference type="ChEBI" id="CHEBI:15378"/>
        <dbReference type="ChEBI" id="CHEBI:57856"/>
        <dbReference type="ChEBI" id="CHEBI:59789"/>
        <dbReference type="ChEBI" id="CHEBI:65315"/>
        <dbReference type="ChEBI" id="CHEBI:74447"/>
        <dbReference type="EC" id="2.1.1.189"/>
    </reaction>
</comment>
<comment type="similarity">
    <text evidence="1">Belongs to the class I-like SAM-binding methyltransferase superfamily. RNA M5U methyltransferase family. RlmC subfamily.</text>
</comment>
<name>RLMC_ECO24</name>
<accession>A7ZJS7</accession>
<organism>
    <name type="scientific">Escherichia coli O139:H28 (strain E24377A / ETEC)</name>
    <dbReference type="NCBI Taxonomy" id="331111"/>
    <lineage>
        <taxon>Bacteria</taxon>
        <taxon>Pseudomonadati</taxon>
        <taxon>Pseudomonadota</taxon>
        <taxon>Gammaproteobacteria</taxon>
        <taxon>Enterobacterales</taxon>
        <taxon>Enterobacteriaceae</taxon>
        <taxon>Escherichia</taxon>
    </lineage>
</organism>
<sequence length="375" mass="41961">MQCALYDAGRCRSCQWITQPIPEQLSAKTADLKNLLADFPVEEWCAPVSGPEQGFRNKAKMVVSGSVEKPLLGMLHRDGTPEDLCDCPLYPASFAPVFAALKPFIARAGLTPYNVARKRGELKYILLTESQSDGGMMLRFVLRSETKLAQLRKALPWLQEQLPQLKVITVNIQPVHMAIMEGETEIYLTEQQALAERFNDVPLWIRPQSFFQTNPAVASQLYATARDWVRQLPVKHMWDLFCGVGGFGLHCATPDMQLTGIEIASEAIACAKQSAAELGLTRLQFQALDSTQFATAQGEVPELVLVNPPRRGIGKPLCDYLSTMAPRFIIYSSCNAQTMAKDIRELPGYRIERVQLFDMFPHTAHYEVLTLLVKQ</sequence>